<evidence type="ECO:0000255" key="1">
    <source>
        <dbReference type="HAMAP-Rule" id="MF_00051"/>
    </source>
</evidence>
<keyword id="KW-0028">Amino-acid biosynthesis</keyword>
<keyword id="KW-0963">Cytoplasm</keyword>
<keyword id="KW-0554">One-carbon metabolism</keyword>
<keyword id="KW-0663">Pyridoxal phosphate</keyword>
<keyword id="KW-0808">Transferase</keyword>
<feature type="chain" id="PRO_0000113534" description="Serine hydroxymethyltransferase">
    <location>
        <begin position="1"/>
        <end position="437"/>
    </location>
</feature>
<feature type="binding site" evidence="1">
    <location>
        <position position="130"/>
    </location>
    <ligand>
        <name>(6S)-5,6,7,8-tetrahydrofolate</name>
        <dbReference type="ChEBI" id="CHEBI:57453"/>
    </ligand>
</feature>
<feature type="binding site" evidence="1">
    <location>
        <begin position="134"/>
        <end position="136"/>
    </location>
    <ligand>
        <name>(6S)-5,6,7,8-tetrahydrofolate</name>
        <dbReference type="ChEBI" id="CHEBI:57453"/>
    </ligand>
</feature>
<feature type="binding site" evidence="1">
    <location>
        <begin position="363"/>
        <end position="365"/>
    </location>
    <ligand>
        <name>(6S)-5,6,7,8-tetrahydrofolate</name>
        <dbReference type="ChEBI" id="CHEBI:57453"/>
    </ligand>
</feature>
<feature type="site" description="Plays an important role in substrate specificity" evidence="1">
    <location>
        <position position="238"/>
    </location>
</feature>
<feature type="modified residue" description="N6-(pyridoxal phosphate)lysine" evidence="1">
    <location>
        <position position="239"/>
    </location>
</feature>
<sequence>MTKQGNDTQKRFFNDNLQTVDVAIFDAIRGEFERQQHEIELIASENIVSRAVLEAQGSVLTNKYAEGYPGKRYYGGCQFVDVIENLAIERAKKLFGADFANVQANSGSQMNQAVFLALLKPGDTFMGLDLNSGGHLTHGSSVNMSGKWFKSISYGVRKEDQLLDMEAVERLAKEHKPKLIIAGGSAYSRLWDWKKFREIADEIGAYLLVDMSHIAGLVAGGVHPSPVPHAHIVTTTTHKSLRGPRGGLILTNDEILAKKINSAIFPGLQGGPLMHVIAAKAVAFEEALQPVFKDYSANVVANAKTLAKTLQSNGFDIVSGGTDNHLLLVDLRSKKVTGKCAELALGRAHITCNKNSIPFDLETPFITSGIRLGSPAATTRGFAENEFIEIAHMISEILDNLGMAKSDEDNSAVEMVVRKKVEDMTNKFPLYSYLHTC</sequence>
<protein>
    <recommendedName>
        <fullName evidence="1">Serine hydroxymethyltransferase</fullName>
        <shortName evidence="1">SHMT</shortName>
        <shortName evidence="1">Serine methylase</shortName>
        <ecNumber evidence="1">2.1.2.1</ecNumber>
    </recommendedName>
</protein>
<name>GLYA_BARHE</name>
<organism>
    <name type="scientific">Bartonella henselae (strain ATCC 49882 / DSM 28221 / CCUG 30454 / Houston 1)</name>
    <name type="common">Rochalimaea henselae</name>
    <dbReference type="NCBI Taxonomy" id="283166"/>
    <lineage>
        <taxon>Bacteria</taxon>
        <taxon>Pseudomonadati</taxon>
        <taxon>Pseudomonadota</taxon>
        <taxon>Alphaproteobacteria</taxon>
        <taxon>Hyphomicrobiales</taxon>
        <taxon>Bartonellaceae</taxon>
        <taxon>Bartonella</taxon>
    </lineage>
</organism>
<proteinExistence type="inferred from homology"/>
<comment type="function">
    <text evidence="1">Catalyzes the reversible interconversion of serine and glycine with tetrahydrofolate (THF) serving as the one-carbon carrier. This reaction serves as the major source of one-carbon groups required for the biosynthesis of purines, thymidylate, methionine, and other important biomolecules. Also exhibits THF-independent aldolase activity toward beta-hydroxyamino acids, producing glycine and aldehydes, via a retro-aldol mechanism.</text>
</comment>
<comment type="catalytic activity">
    <reaction evidence="1">
        <text>(6R)-5,10-methylene-5,6,7,8-tetrahydrofolate + glycine + H2O = (6S)-5,6,7,8-tetrahydrofolate + L-serine</text>
        <dbReference type="Rhea" id="RHEA:15481"/>
        <dbReference type="ChEBI" id="CHEBI:15377"/>
        <dbReference type="ChEBI" id="CHEBI:15636"/>
        <dbReference type="ChEBI" id="CHEBI:33384"/>
        <dbReference type="ChEBI" id="CHEBI:57305"/>
        <dbReference type="ChEBI" id="CHEBI:57453"/>
        <dbReference type="EC" id="2.1.2.1"/>
    </reaction>
</comment>
<comment type="cofactor">
    <cofactor evidence="1">
        <name>pyridoxal 5'-phosphate</name>
        <dbReference type="ChEBI" id="CHEBI:597326"/>
    </cofactor>
</comment>
<comment type="pathway">
    <text evidence="1">One-carbon metabolism; tetrahydrofolate interconversion.</text>
</comment>
<comment type="pathway">
    <text evidence="1">Amino-acid biosynthesis; glycine biosynthesis; glycine from L-serine: step 1/1.</text>
</comment>
<comment type="subunit">
    <text evidence="1">Homodimer.</text>
</comment>
<comment type="subcellular location">
    <subcellularLocation>
        <location evidence="1">Cytoplasm</location>
    </subcellularLocation>
</comment>
<comment type="similarity">
    <text evidence="1">Belongs to the SHMT family.</text>
</comment>
<dbReference type="EC" id="2.1.2.1" evidence="1"/>
<dbReference type="EMBL" id="BX897699">
    <property type="protein sequence ID" value="CAF27555.1"/>
    <property type="molecule type" value="Genomic_DNA"/>
</dbReference>
<dbReference type="RefSeq" id="WP_011180656.1">
    <property type="nucleotide sequence ID" value="NZ_LRIJ02000001.1"/>
</dbReference>
<dbReference type="SMR" id="Q6G3L3"/>
<dbReference type="PaxDb" id="283166-BH07540"/>
<dbReference type="EnsemblBacteria" id="CAF27555">
    <property type="protein sequence ID" value="CAF27555"/>
    <property type="gene ID" value="BH07540"/>
</dbReference>
<dbReference type="GeneID" id="92985575"/>
<dbReference type="KEGG" id="bhe:BH07540"/>
<dbReference type="eggNOG" id="COG0112">
    <property type="taxonomic scope" value="Bacteria"/>
</dbReference>
<dbReference type="OrthoDB" id="9803846at2"/>
<dbReference type="UniPathway" id="UPA00193"/>
<dbReference type="UniPathway" id="UPA00288">
    <property type="reaction ID" value="UER01023"/>
</dbReference>
<dbReference type="Proteomes" id="UP000000421">
    <property type="component" value="Chromosome"/>
</dbReference>
<dbReference type="GO" id="GO:0005829">
    <property type="term" value="C:cytosol"/>
    <property type="evidence" value="ECO:0007669"/>
    <property type="project" value="TreeGrafter"/>
</dbReference>
<dbReference type="GO" id="GO:0004372">
    <property type="term" value="F:glycine hydroxymethyltransferase activity"/>
    <property type="evidence" value="ECO:0007669"/>
    <property type="project" value="UniProtKB-UniRule"/>
</dbReference>
<dbReference type="GO" id="GO:0030170">
    <property type="term" value="F:pyridoxal phosphate binding"/>
    <property type="evidence" value="ECO:0007669"/>
    <property type="project" value="UniProtKB-UniRule"/>
</dbReference>
<dbReference type="GO" id="GO:0019264">
    <property type="term" value="P:glycine biosynthetic process from serine"/>
    <property type="evidence" value="ECO:0007669"/>
    <property type="project" value="UniProtKB-UniRule"/>
</dbReference>
<dbReference type="GO" id="GO:0035999">
    <property type="term" value="P:tetrahydrofolate interconversion"/>
    <property type="evidence" value="ECO:0007669"/>
    <property type="project" value="UniProtKB-UniRule"/>
</dbReference>
<dbReference type="CDD" id="cd00378">
    <property type="entry name" value="SHMT"/>
    <property type="match status" value="1"/>
</dbReference>
<dbReference type="FunFam" id="3.40.640.10:FF:000001">
    <property type="entry name" value="Serine hydroxymethyltransferase"/>
    <property type="match status" value="1"/>
</dbReference>
<dbReference type="Gene3D" id="3.90.1150.10">
    <property type="entry name" value="Aspartate Aminotransferase, domain 1"/>
    <property type="match status" value="1"/>
</dbReference>
<dbReference type="Gene3D" id="3.40.640.10">
    <property type="entry name" value="Type I PLP-dependent aspartate aminotransferase-like (Major domain)"/>
    <property type="match status" value="1"/>
</dbReference>
<dbReference type="HAMAP" id="MF_00051">
    <property type="entry name" value="SHMT"/>
    <property type="match status" value="1"/>
</dbReference>
<dbReference type="InterPro" id="IPR015424">
    <property type="entry name" value="PyrdxlP-dep_Trfase"/>
</dbReference>
<dbReference type="InterPro" id="IPR015421">
    <property type="entry name" value="PyrdxlP-dep_Trfase_major"/>
</dbReference>
<dbReference type="InterPro" id="IPR015422">
    <property type="entry name" value="PyrdxlP-dep_Trfase_small"/>
</dbReference>
<dbReference type="InterPro" id="IPR001085">
    <property type="entry name" value="Ser_HO-MeTrfase"/>
</dbReference>
<dbReference type="InterPro" id="IPR049943">
    <property type="entry name" value="Ser_HO-MeTrfase-like"/>
</dbReference>
<dbReference type="InterPro" id="IPR019798">
    <property type="entry name" value="Ser_HO-MeTrfase_PLP_BS"/>
</dbReference>
<dbReference type="InterPro" id="IPR039429">
    <property type="entry name" value="SHMT-like_dom"/>
</dbReference>
<dbReference type="NCBIfam" id="NF000586">
    <property type="entry name" value="PRK00011.1"/>
    <property type="match status" value="1"/>
</dbReference>
<dbReference type="PANTHER" id="PTHR11680">
    <property type="entry name" value="SERINE HYDROXYMETHYLTRANSFERASE"/>
    <property type="match status" value="1"/>
</dbReference>
<dbReference type="PANTHER" id="PTHR11680:SF35">
    <property type="entry name" value="SERINE HYDROXYMETHYLTRANSFERASE 1"/>
    <property type="match status" value="1"/>
</dbReference>
<dbReference type="Pfam" id="PF00464">
    <property type="entry name" value="SHMT"/>
    <property type="match status" value="1"/>
</dbReference>
<dbReference type="PIRSF" id="PIRSF000412">
    <property type="entry name" value="SHMT"/>
    <property type="match status" value="1"/>
</dbReference>
<dbReference type="SUPFAM" id="SSF53383">
    <property type="entry name" value="PLP-dependent transferases"/>
    <property type="match status" value="1"/>
</dbReference>
<dbReference type="PROSITE" id="PS00096">
    <property type="entry name" value="SHMT"/>
    <property type="match status" value="1"/>
</dbReference>
<accession>Q6G3L3</accession>
<reference key="1">
    <citation type="journal article" date="2004" name="Proc. Natl. Acad. Sci. U.S.A.">
        <title>The louse-borne human pathogen Bartonella quintana is a genomic derivative of the zoonotic agent Bartonella henselae.</title>
        <authorList>
            <person name="Alsmark U.C.M."/>
            <person name="Frank A.C."/>
            <person name="Karlberg E.O."/>
            <person name="Legault B.-A."/>
            <person name="Ardell D.H."/>
            <person name="Canbaeck B."/>
            <person name="Eriksson A.-S."/>
            <person name="Naeslund A.K."/>
            <person name="Handley S.A."/>
            <person name="Huvet M."/>
            <person name="La Scola B."/>
            <person name="Holmberg M."/>
            <person name="Andersson S.G.E."/>
        </authorList>
    </citation>
    <scope>NUCLEOTIDE SEQUENCE [LARGE SCALE GENOMIC DNA]</scope>
    <source>
        <strain>ATCC 49882 / DSM 28221 / CCUG 30454 / Houston 1</strain>
    </source>
</reference>
<gene>
    <name evidence="1" type="primary">glyA</name>
    <name type="ordered locus">BH07540</name>
</gene>